<evidence type="ECO:0000255" key="1">
    <source>
        <dbReference type="HAMAP-Rule" id="MF_00318"/>
    </source>
</evidence>
<keyword id="KW-0963">Cytoplasm</keyword>
<keyword id="KW-0324">Glycolysis</keyword>
<keyword id="KW-0456">Lyase</keyword>
<keyword id="KW-0460">Magnesium</keyword>
<keyword id="KW-0479">Metal-binding</keyword>
<keyword id="KW-0964">Secreted</keyword>
<sequence length="427" mass="46037">MKTQIQAIHAREILDSRGNPTVEVDVTLECGAMGRASVPSGASTGAHEAVELRDKDTQRYSGKGVLKAVSNVNTEILESLRGMNAIDQEQIDHLMIKLDGTSDKSRLGGNAILGVSLAVARAAASALNLPLFQYLGGEQAARMPVPMFNILNGGVHANWQGPDFQEFMIAPTGAGSFKEALRWGSEVYHELKAVLKDAGYSTAVGDEGGFAPALKKNSDAIELIIKAIERAGYTPGSQIEIAIDPASSGFYENGLYHLRSEGRKVDAQELINLYSSWVDKYPIAVLEDGLAEDDWSGWKLLNAALGDRIELVGDDLFVTNVERIQRGITENVANAVLIKPNQIGTLTETKAAIEMAYGANWGAMVSHRSGETVDSSIADLTVAMGTGHLKTGAPCRGERVEKYNQFLRIEEDLGSRAFYAGHDAFVR</sequence>
<proteinExistence type="inferred from homology"/>
<accession>Q4ZWE0</accession>
<comment type="function">
    <text evidence="1">Catalyzes the reversible conversion of 2-phosphoglycerate (2-PG) into phosphoenolpyruvate (PEP). It is essential for the degradation of carbohydrates via glycolysis.</text>
</comment>
<comment type="catalytic activity">
    <reaction evidence="1">
        <text>(2R)-2-phosphoglycerate = phosphoenolpyruvate + H2O</text>
        <dbReference type="Rhea" id="RHEA:10164"/>
        <dbReference type="ChEBI" id="CHEBI:15377"/>
        <dbReference type="ChEBI" id="CHEBI:58289"/>
        <dbReference type="ChEBI" id="CHEBI:58702"/>
        <dbReference type="EC" id="4.2.1.11"/>
    </reaction>
</comment>
<comment type="cofactor">
    <cofactor evidence="1">
        <name>Mg(2+)</name>
        <dbReference type="ChEBI" id="CHEBI:18420"/>
    </cofactor>
    <text evidence="1">Binds a second Mg(2+) ion via substrate during catalysis.</text>
</comment>
<comment type="pathway">
    <text evidence="1">Carbohydrate degradation; glycolysis; pyruvate from D-glyceraldehyde 3-phosphate: step 4/5.</text>
</comment>
<comment type="subunit">
    <text evidence="1">Component of the RNA degradosome, a multiprotein complex involved in RNA processing and mRNA degradation.</text>
</comment>
<comment type="subcellular location">
    <subcellularLocation>
        <location evidence="1">Cytoplasm</location>
    </subcellularLocation>
    <subcellularLocation>
        <location evidence="1">Secreted</location>
    </subcellularLocation>
    <subcellularLocation>
        <location evidence="1">Cell surface</location>
    </subcellularLocation>
    <text evidence="1">Fractions of enolase are present in both the cytoplasm and on the cell surface.</text>
</comment>
<comment type="similarity">
    <text evidence="1">Belongs to the enolase family.</text>
</comment>
<name>ENO2_PSEU2</name>
<feature type="chain" id="PRO_0000267080" description="Enolase 2">
    <location>
        <begin position="1"/>
        <end position="427"/>
    </location>
</feature>
<feature type="active site" description="Proton donor" evidence="1">
    <location>
        <position position="207"/>
    </location>
</feature>
<feature type="active site" description="Proton acceptor" evidence="1">
    <location>
        <position position="339"/>
    </location>
</feature>
<feature type="binding site" evidence="1">
    <location>
        <position position="165"/>
    </location>
    <ligand>
        <name>(2R)-2-phosphoglycerate</name>
        <dbReference type="ChEBI" id="CHEBI:58289"/>
    </ligand>
</feature>
<feature type="binding site" evidence="1">
    <location>
        <position position="244"/>
    </location>
    <ligand>
        <name>Mg(2+)</name>
        <dbReference type="ChEBI" id="CHEBI:18420"/>
    </ligand>
</feature>
<feature type="binding site" evidence="1">
    <location>
        <position position="287"/>
    </location>
    <ligand>
        <name>Mg(2+)</name>
        <dbReference type="ChEBI" id="CHEBI:18420"/>
    </ligand>
</feature>
<feature type="binding site" evidence="1">
    <location>
        <position position="314"/>
    </location>
    <ligand>
        <name>Mg(2+)</name>
        <dbReference type="ChEBI" id="CHEBI:18420"/>
    </ligand>
</feature>
<feature type="binding site" evidence="1">
    <location>
        <position position="339"/>
    </location>
    <ligand>
        <name>(2R)-2-phosphoglycerate</name>
        <dbReference type="ChEBI" id="CHEBI:58289"/>
    </ligand>
</feature>
<feature type="binding site" evidence="1">
    <location>
        <position position="368"/>
    </location>
    <ligand>
        <name>(2R)-2-phosphoglycerate</name>
        <dbReference type="ChEBI" id="CHEBI:58289"/>
    </ligand>
</feature>
<feature type="binding site" evidence="1">
    <location>
        <position position="369"/>
    </location>
    <ligand>
        <name>(2R)-2-phosphoglycerate</name>
        <dbReference type="ChEBI" id="CHEBI:58289"/>
    </ligand>
</feature>
<feature type="binding site" evidence="1">
    <location>
        <position position="390"/>
    </location>
    <ligand>
        <name>(2R)-2-phosphoglycerate</name>
        <dbReference type="ChEBI" id="CHEBI:58289"/>
    </ligand>
</feature>
<organism>
    <name type="scientific">Pseudomonas syringae pv. syringae (strain B728a)</name>
    <dbReference type="NCBI Taxonomy" id="205918"/>
    <lineage>
        <taxon>Bacteria</taxon>
        <taxon>Pseudomonadati</taxon>
        <taxon>Pseudomonadota</taxon>
        <taxon>Gammaproteobacteria</taxon>
        <taxon>Pseudomonadales</taxon>
        <taxon>Pseudomonadaceae</taxon>
        <taxon>Pseudomonas</taxon>
        <taxon>Pseudomonas syringae</taxon>
    </lineage>
</organism>
<dbReference type="EC" id="4.2.1.11" evidence="1"/>
<dbReference type="EMBL" id="CP000075">
    <property type="protein sequence ID" value="AAY36532.1"/>
    <property type="molecule type" value="Genomic_DNA"/>
</dbReference>
<dbReference type="RefSeq" id="YP_234570.1">
    <property type="nucleotide sequence ID" value="NC_007005.1"/>
</dbReference>
<dbReference type="SMR" id="Q4ZWE0"/>
<dbReference type="STRING" id="205918.Psyr_1482"/>
<dbReference type="KEGG" id="psb:Psyr_1482"/>
<dbReference type="PATRIC" id="fig|205918.7.peg.1513"/>
<dbReference type="eggNOG" id="COG0148">
    <property type="taxonomic scope" value="Bacteria"/>
</dbReference>
<dbReference type="HOGENOM" id="CLU_031223_2_1_6"/>
<dbReference type="OrthoDB" id="9804716at2"/>
<dbReference type="UniPathway" id="UPA00109">
    <property type="reaction ID" value="UER00187"/>
</dbReference>
<dbReference type="Proteomes" id="UP000000426">
    <property type="component" value="Chromosome"/>
</dbReference>
<dbReference type="GO" id="GO:0009986">
    <property type="term" value="C:cell surface"/>
    <property type="evidence" value="ECO:0007669"/>
    <property type="project" value="UniProtKB-SubCell"/>
</dbReference>
<dbReference type="GO" id="GO:0005576">
    <property type="term" value="C:extracellular region"/>
    <property type="evidence" value="ECO:0007669"/>
    <property type="project" value="UniProtKB-SubCell"/>
</dbReference>
<dbReference type="GO" id="GO:0000015">
    <property type="term" value="C:phosphopyruvate hydratase complex"/>
    <property type="evidence" value="ECO:0007669"/>
    <property type="project" value="InterPro"/>
</dbReference>
<dbReference type="GO" id="GO:0000287">
    <property type="term" value="F:magnesium ion binding"/>
    <property type="evidence" value="ECO:0007669"/>
    <property type="project" value="UniProtKB-UniRule"/>
</dbReference>
<dbReference type="GO" id="GO:0004634">
    <property type="term" value="F:phosphopyruvate hydratase activity"/>
    <property type="evidence" value="ECO:0007669"/>
    <property type="project" value="UniProtKB-UniRule"/>
</dbReference>
<dbReference type="GO" id="GO:0006096">
    <property type="term" value="P:glycolytic process"/>
    <property type="evidence" value="ECO:0007669"/>
    <property type="project" value="UniProtKB-UniRule"/>
</dbReference>
<dbReference type="CDD" id="cd03313">
    <property type="entry name" value="enolase"/>
    <property type="match status" value="1"/>
</dbReference>
<dbReference type="FunFam" id="3.30.390.10:FF:000001">
    <property type="entry name" value="Enolase"/>
    <property type="match status" value="1"/>
</dbReference>
<dbReference type="Gene3D" id="3.20.20.120">
    <property type="entry name" value="Enolase-like C-terminal domain"/>
    <property type="match status" value="1"/>
</dbReference>
<dbReference type="Gene3D" id="3.30.390.10">
    <property type="entry name" value="Enolase-like, N-terminal domain"/>
    <property type="match status" value="1"/>
</dbReference>
<dbReference type="HAMAP" id="MF_00318">
    <property type="entry name" value="Enolase"/>
    <property type="match status" value="1"/>
</dbReference>
<dbReference type="InterPro" id="IPR000941">
    <property type="entry name" value="Enolase"/>
</dbReference>
<dbReference type="InterPro" id="IPR036849">
    <property type="entry name" value="Enolase-like_C_sf"/>
</dbReference>
<dbReference type="InterPro" id="IPR029017">
    <property type="entry name" value="Enolase-like_N"/>
</dbReference>
<dbReference type="InterPro" id="IPR020810">
    <property type="entry name" value="Enolase_C"/>
</dbReference>
<dbReference type="InterPro" id="IPR020809">
    <property type="entry name" value="Enolase_CS"/>
</dbReference>
<dbReference type="InterPro" id="IPR020811">
    <property type="entry name" value="Enolase_N"/>
</dbReference>
<dbReference type="NCBIfam" id="TIGR01060">
    <property type="entry name" value="eno"/>
    <property type="match status" value="1"/>
</dbReference>
<dbReference type="PANTHER" id="PTHR11902">
    <property type="entry name" value="ENOLASE"/>
    <property type="match status" value="1"/>
</dbReference>
<dbReference type="PANTHER" id="PTHR11902:SF1">
    <property type="entry name" value="ENOLASE"/>
    <property type="match status" value="1"/>
</dbReference>
<dbReference type="Pfam" id="PF00113">
    <property type="entry name" value="Enolase_C"/>
    <property type="match status" value="1"/>
</dbReference>
<dbReference type="Pfam" id="PF03952">
    <property type="entry name" value="Enolase_N"/>
    <property type="match status" value="1"/>
</dbReference>
<dbReference type="PIRSF" id="PIRSF001400">
    <property type="entry name" value="Enolase"/>
    <property type="match status" value="1"/>
</dbReference>
<dbReference type="PRINTS" id="PR00148">
    <property type="entry name" value="ENOLASE"/>
</dbReference>
<dbReference type="SFLD" id="SFLDF00002">
    <property type="entry name" value="enolase"/>
    <property type="match status" value="1"/>
</dbReference>
<dbReference type="SFLD" id="SFLDG00178">
    <property type="entry name" value="enolase"/>
    <property type="match status" value="1"/>
</dbReference>
<dbReference type="SMART" id="SM01192">
    <property type="entry name" value="Enolase_C"/>
    <property type="match status" value="1"/>
</dbReference>
<dbReference type="SMART" id="SM01193">
    <property type="entry name" value="Enolase_N"/>
    <property type="match status" value="1"/>
</dbReference>
<dbReference type="SUPFAM" id="SSF51604">
    <property type="entry name" value="Enolase C-terminal domain-like"/>
    <property type="match status" value="1"/>
</dbReference>
<dbReference type="SUPFAM" id="SSF54826">
    <property type="entry name" value="Enolase N-terminal domain-like"/>
    <property type="match status" value="1"/>
</dbReference>
<dbReference type="PROSITE" id="PS00164">
    <property type="entry name" value="ENOLASE"/>
    <property type="match status" value="1"/>
</dbReference>
<gene>
    <name evidence="1" type="primary">eno2</name>
    <name type="ordered locus">Psyr_1482</name>
</gene>
<protein>
    <recommendedName>
        <fullName evidence="1">Enolase 2</fullName>
        <ecNumber evidence="1">4.2.1.11</ecNumber>
    </recommendedName>
    <alternativeName>
        <fullName evidence="1">2-phospho-D-glycerate hydro-lyase 2</fullName>
    </alternativeName>
    <alternativeName>
        <fullName evidence="1">2-phosphoglycerate dehydratase 2</fullName>
    </alternativeName>
</protein>
<reference key="1">
    <citation type="journal article" date="2005" name="Proc. Natl. Acad. Sci. U.S.A.">
        <title>Comparison of the complete genome sequences of Pseudomonas syringae pv. syringae B728a and pv. tomato DC3000.</title>
        <authorList>
            <person name="Feil H."/>
            <person name="Feil W.S."/>
            <person name="Chain P."/>
            <person name="Larimer F."/>
            <person name="Dibartolo G."/>
            <person name="Copeland A."/>
            <person name="Lykidis A."/>
            <person name="Trong S."/>
            <person name="Nolan M."/>
            <person name="Goltsman E."/>
            <person name="Thiel J."/>
            <person name="Malfatti S."/>
            <person name="Loper J.E."/>
            <person name="Lapidus A."/>
            <person name="Detter J.C."/>
            <person name="Land M."/>
            <person name="Richardson P.M."/>
            <person name="Kyrpides N.C."/>
            <person name="Ivanova N."/>
            <person name="Lindow S.E."/>
        </authorList>
    </citation>
    <scope>NUCLEOTIDE SEQUENCE [LARGE SCALE GENOMIC DNA]</scope>
    <source>
        <strain>B728a</strain>
    </source>
</reference>